<proteinExistence type="inferred from homology"/>
<gene>
    <name type="primary">papA5</name>
    <name type="ordered locus">ML2349</name>
    <name type="ORF">MLCB2407.01</name>
</gene>
<evidence type="ECO:0000250" key="1"/>
<evidence type="ECO:0000250" key="2">
    <source>
        <dbReference type="UniProtKB" id="P9WIN5"/>
    </source>
</evidence>
<evidence type="ECO:0000305" key="3"/>
<sequence length="423" mass="45595">MFAGSVIRKLSHSEEVFARYEVFTSMTIQLRGVLDIDALSEAFDALVQAHPVLASHLETSSDGGWNLVADDLLHPGICVVDANNGAQSGCGGIQSETRLDQSVSLLNLRLTPREGGGELVLYIHHSMADGHHGAVLVDELFSRYTDVVTTGDPGPIIPQATPLSMEAVLQQRGVKKHALSGAERFMSVMYAYDLPATGTPAVLAEPGLPQAVPVTRLWLTKQETSDLAAFGREHRLSINAVVAAAILMTEWRLRETPHVPIPYVYPVDLRYVLAPPVAPTESTNLLGAAGYLAEIGQDTDIVDLATDIVATLRADLANGVVQQSGLHFGTAFEGTPPGLPPLVFCTDATAFPTMRTPPDLAIEDIQGRFYCSISVPLDLYSCGVYEGQLIIEHHGHIEEPAKALEAIRSLLCTVPSEYGWIME</sequence>
<name>PAPA5_MYCLE</name>
<keyword id="KW-0012">Acyltransferase</keyword>
<keyword id="KW-0444">Lipid biosynthesis</keyword>
<keyword id="KW-0443">Lipid metabolism</keyword>
<keyword id="KW-1185">Reference proteome</keyword>
<keyword id="KW-0808">Transferase</keyword>
<organism>
    <name type="scientific">Mycobacterium leprae (strain TN)</name>
    <dbReference type="NCBI Taxonomy" id="272631"/>
    <lineage>
        <taxon>Bacteria</taxon>
        <taxon>Bacillati</taxon>
        <taxon>Actinomycetota</taxon>
        <taxon>Actinomycetes</taxon>
        <taxon>Mycobacteriales</taxon>
        <taxon>Mycobacteriaceae</taxon>
        <taxon>Mycobacterium</taxon>
    </lineage>
</organism>
<reference key="1">
    <citation type="submission" date="1994-03" db="EMBL/GenBank/DDBJ databases">
        <authorList>
            <person name="Smith D.R."/>
            <person name="Robison K."/>
        </authorList>
    </citation>
    <scope>NUCLEOTIDE SEQUENCE [GENOMIC DNA]</scope>
</reference>
<reference key="2">
    <citation type="journal article" date="2001" name="Nature">
        <title>Massive gene decay in the leprosy bacillus.</title>
        <authorList>
            <person name="Cole S.T."/>
            <person name="Eiglmeier K."/>
            <person name="Parkhill J."/>
            <person name="James K.D."/>
            <person name="Thomson N.R."/>
            <person name="Wheeler P.R."/>
            <person name="Honore N."/>
            <person name="Garnier T."/>
            <person name="Churcher C.M."/>
            <person name="Harris D.E."/>
            <person name="Mungall K.L."/>
            <person name="Basham D."/>
            <person name="Brown D."/>
            <person name="Chillingworth T."/>
            <person name="Connor R."/>
            <person name="Davies R.M."/>
            <person name="Devlin K."/>
            <person name="Duthoy S."/>
            <person name="Feltwell T."/>
            <person name="Fraser A."/>
            <person name="Hamlin N."/>
            <person name="Holroyd S."/>
            <person name="Hornsby T."/>
            <person name="Jagels K."/>
            <person name="Lacroix C."/>
            <person name="Maclean J."/>
            <person name="Moule S."/>
            <person name="Murphy L.D."/>
            <person name="Oliver K."/>
            <person name="Quail M.A."/>
            <person name="Rajandream M.A."/>
            <person name="Rutherford K.M."/>
            <person name="Rutter S."/>
            <person name="Seeger K."/>
            <person name="Simon S."/>
            <person name="Simmonds M."/>
            <person name="Skelton J."/>
            <person name="Squares R."/>
            <person name="Squares S."/>
            <person name="Stevens K."/>
            <person name="Taylor K."/>
            <person name="Whitehead S."/>
            <person name="Woodward J.R."/>
            <person name="Barrell B.G."/>
        </authorList>
    </citation>
    <scope>NUCLEOTIDE SEQUENCE [LARGE SCALE GENOMIC DNA]</scope>
    <source>
        <strain>TN</strain>
    </source>
</reference>
<accession>Q49939</accession>
<accession>Q9S381</accession>
<protein>
    <recommendedName>
        <fullName>Phthiocerol/phthiodiolone dimycocerosyl transferase</fullName>
        <ecNumber evidence="2">2.3.1.282</ecNumber>
    </recommendedName>
    <alternativeName>
        <fullName>Acyltransferase PapA5</fullName>
    </alternativeName>
    <alternativeName>
        <fullName>Phthiocerol/phthiodiolone O-acyltransferase</fullName>
    </alternativeName>
    <alternativeName>
        <fullName>Polyketide synthase-associated protein A5</fullName>
    </alternativeName>
</protein>
<comment type="function">
    <text evidence="2">Catalyzes diesterification of phthiocerol, phthiodiolone, and phenolphthiocerol with mycocerosic acids, the final step in the phthiocerol, phthiodiolone and phenolphthiocerol dimycocerosate esters (PDIM) synthesis. Can directly transfer the mycocerosate bound to the mycocerosic acid synthase (mas) onto the substrate alcohols.</text>
</comment>
<comment type="catalytic activity">
    <reaction evidence="2">
        <text>2 a mycocerosyl-[mycocerosic acid synthase] + a phthiocerol = a dimycocerosyl phthiocerol + 2 holo-[mycocerosic acid synthase].</text>
        <dbReference type="EC" id="2.3.1.282"/>
    </reaction>
</comment>
<comment type="catalytic activity">
    <reaction evidence="2">
        <text>2 a mycocerosyl-[mycocerosic acid synthase] + a phthiodiolone = a dimycocerosyl phthiodiolone + 2 holo-[mycocerosic acid synthase].</text>
        <dbReference type="EC" id="2.3.1.282"/>
    </reaction>
</comment>
<comment type="catalytic activity">
    <reaction evidence="2">
        <text>2 a mycocerosyl-[mycocerosic acid synthase] + a phenolphthiocerol = a dimycocerosyl phenolphthiocerol + 2 holo-[mycocerosic acid synthase].</text>
        <dbReference type="EC" id="2.3.1.282"/>
    </reaction>
</comment>
<comment type="subunit">
    <text evidence="2">Monomer. Interacts directly with the acyl carrier protein (ACP) domain of the mycocerosic acid synthase (mas) protein.</text>
</comment>
<comment type="domain">
    <text evidence="2">Consists of two structural domains that are related to each other.</text>
</comment>
<comment type="similarity">
    <text evidence="3">Belongs to the acyltransferase PapA5 family.</text>
</comment>
<feature type="chain" id="PRO_0000332104" description="Phthiocerol/phthiodiolone dimycocerosyl transferase">
    <location>
        <begin position="1"/>
        <end position="423"/>
    </location>
</feature>
<feature type="active site" description="Proton acceptor" evidence="1">
    <location>
        <position position="125"/>
    </location>
</feature>
<feature type="site" description="Structural role in the organization of the active site" evidence="1">
    <location>
        <position position="129"/>
    </location>
</feature>
<feature type="site" description="Important for mas ACP domain recognition" evidence="1">
    <location>
        <position position="313"/>
    </location>
</feature>
<dbReference type="EC" id="2.3.1.282" evidence="2"/>
<dbReference type="EMBL" id="U00023">
    <property type="protein sequence ID" value="AAA17363.1"/>
    <property type="molecule type" value="Genomic_DNA"/>
</dbReference>
<dbReference type="EMBL" id="AL023596">
    <property type="protein sequence ID" value="CAA19141.1"/>
    <property type="molecule type" value="Genomic_DNA"/>
</dbReference>
<dbReference type="EMBL" id="AL583925">
    <property type="protein sequence ID" value="CAC31865.1"/>
    <property type="molecule type" value="Genomic_DNA"/>
</dbReference>
<dbReference type="PIR" id="S73020">
    <property type="entry name" value="S73020"/>
</dbReference>
<dbReference type="RefSeq" id="NP_302528.1">
    <property type="nucleotide sequence ID" value="NC_002677.1"/>
</dbReference>
<dbReference type="RefSeq" id="WP_010908848.1">
    <property type="nucleotide sequence ID" value="NC_002677.1"/>
</dbReference>
<dbReference type="SMR" id="Q49939"/>
<dbReference type="STRING" id="272631.gene:17576211"/>
<dbReference type="KEGG" id="mle:ML2349"/>
<dbReference type="PATRIC" id="fig|272631.5.peg.4508"/>
<dbReference type="Leproma" id="ML2349"/>
<dbReference type="eggNOG" id="COG1020">
    <property type="taxonomic scope" value="Bacteria"/>
</dbReference>
<dbReference type="HOGENOM" id="CLU_050374_1_0_11"/>
<dbReference type="OrthoDB" id="3318646at2"/>
<dbReference type="Proteomes" id="UP000000806">
    <property type="component" value="Chromosome"/>
</dbReference>
<dbReference type="GO" id="GO:0016746">
    <property type="term" value="F:acyltransferase activity"/>
    <property type="evidence" value="ECO:0007669"/>
    <property type="project" value="UniProtKB-KW"/>
</dbReference>
<dbReference type="GO" id="GO:0006629">
    <property type="term" value="P:lipid metabolic process"/>
    <property type="evidence" value="ECO:0007669"/>
    <property type="project" value="UniProtKB-KW"/>
</dbReference>
<dbReference type="Gene3D" id="3.30.559.10">
    <property type="entry name" value="Chloramphenicol acetyltransferase-like domain"/>
    <property type="match status" value="1"/>
</dbReference>
<dbReference type="Gene3D" id="3.30.559.30">
    <property type="entry name" value="Nonribosomal peptide synthetase, condensation domain"/>
    <property type="match status" value="1"/>
</dbReference>
<dbReference type="InterPro" id="IPR023213">
    <property type="entry name" value="CAT-like_dom_sf"/>
</dbReference>
<dbReference type="InterPro" id="IPR031641">
    <property type="entry name" value="PapA_C"/>
</dbReference>
<dbReference type="NCBIfam" id="NF006788">
    <property type="entry name" value="PRK09294.1-2"/>
    <property type="match status" value="1"/>
</dbReference>
<dbReference type="Pfam" id="PF16911">
    <property type="entry name" value="PapA_C"/>
    <property type="match status" value="1"/>
</dbReference>
<dbReference type="SUPFAM" id="SSF52777">
    <property type="entry name" value="CoA-dependent acyltransferases"/>
    <property type="match status" value="2"/>
</dbReference>